<evidence type="ECO:0000255" key="1">
    <source>
        <dbReference type="HAMAP-Rule" id="MF_01640"/>
    </source>
</evidence>
<reference key="1">
    <citation type="journal article" date="2008" name="BMC Genomics">
        <title>Genomics of an extreme psychrophile, Psychromonas ingrahamii.</title>
        <authorList>
            <person name="Riley M."/>
            <person name="Staley J.T."/>
            <person name="Danchin A."/>
            <person name="Wang T.Z."/>
            <person name="Brettin T.S."/>
            <person name="Hauser L.J."/>
            <person name="Land M.L."/>
            <person name="Thompson L.S."/>
        </authorList>
    </citation>
    <scope>NUCLEOTIDE SEQUENCE [LARGE SCALE GENOMIC DNA]</scope>
    <source>
        <strain>DSM 17664 / CCUG 51855 / 37</strain>
    </source>
</reference>
<proteinExistence type="inferred from homology"/>
<organism>
    <name type="scientific">Psychromonas ingrahamii (strain DSM 17664 / CCUG 51855 / 37)</name>
    <dbReference type="NCBI Taxonomy" id="357804"/>
    <lineage>
        <taxon>Bacteria</taxon>
        <taxon>Pseudomonadati</taxon>
        <taxon>Pseudomonadota</taxon>
        <taxon>Gammaproteobacteria</taxon>
        <taxon>Alteromonadales</taxon>
        <taxon>Psychromonadaceae</taxon>
        <taxon>Psychromonas</taxon>
    </lineage>
</organism>
<feature type="chain" id="PRO_0000293155" description="D-erythrose-4-phosphate dehydrogenase">
    <location>
        <begin position="1"/>
        <end position="371"/>
    </location>
</feature>
<feature type="active site" description="Nucleophile" evidence="1">
    <location>
        <position position="155"/>
    </location>
</feature>
<feature type="binding site" evidence="1">
    <location>
        <begin position="12"/>
        <end position="13"/>
    </location>
    <ligand>
        <name>NAD(+)</name>
        <dbReference type="ChEBI" id="CHEBI:57540"/>
    </ligand>
</feature>
<feature type="binding site" evidence="1">
    <location>
        <begin position="154"/>
        <end position="156"/>
    </location>
    <ligand>
        <name>substrate</name>
    </ligand>
</feature>
<feature type="binding site" evidence="1">
    <location>
        <position position="200"/>
    </location>
    <ligand>
        <name>substrate</name>
    </ligand>
</feature>
<feature type="binding site" evidence="1">
    <location>
        <begin position="213"/>
        <end position="214"/>
    </location>
    <ligand>
        <name>substrate</name>
    </ligand>
</feature>
<feature type="binding site" evidence="1">
    <location>
        <position position="236"/>
    </location>
    <ligand>
        <name>substrate</name>
    </ligand>
</feature>
<feature type="binding site" evidence="1">
    <location>
        <position position="318"/>
    </location>
    <ligand>
        <name>NAD(+)</name>
        <dbReference type="ChEBI" id="CHEBI:57540"/>
    </ligand>
</feature>
<feature type="site" description="Activates thiol group during catalysis" evidence="1">
    <location>
        <position position="182"/>
    </location>
</feature>
<keyword id="KW-0963">Cytoplasm</keyword>
<keyword id="KW-0520">NAD</keyword>
<keyword id="KW-0560">Oxidoreductase</keyword>
<keyword id="KW-0664">Pyridoxine biosynthesis</keyword>
<keyword id="KW-1185">Reference proteome</keyword>
<dbReference type="EC" id="1.2.1.72" evidence="1"/>
<dbReference type="EMBL" id="CP000510">
    <property type="protein sequence ID" value="ABM03554.1"/>
    <property type="molecule type" value="Genomic_DNA"/>
</dbReference>
<dbReference type="RefSeq" id="WP_011770114.1">
    <property type="nucleotide sequence ID" value="NC_008709.1"/>
</dbReference>
<dbReference type="SMR" id="A1SVN9"/>
<dbReference type="STRING" id="357804.Ping_1771"/>
<dbReference type="KEGG" id="pin:Ping_1771"/>
<dbReference type="eggNOG" id="COG0057">
    <property type="taxonomic scope" value="Bacteria"/>
</dbReference>
<dbReference type="HOGENOM" id="CLU_030140_0_2_6"/>
<dbReference type="OrthoDB" id="9803304at2"/>
<dbReference type="UniPathway" id="UPA00244">
    <property type="reaction ID" value="UER00309"/>
</dbReference>
<dbReference type="Proteomes" id="UP000000639">
    <property type="component" value="Chromosome"/>
</dbReference>
<dbReference type="GO" id="GO:0005737">
    <property type="term" value="C:cytoplasm"/>
    <property type="evidence" value="ECO:0007669"/>
    <property type="project" value="UniProtKB-SubCell"/>
</dbReference>
<dbReference type="GO" id="GO:0048001">
    <property type="term" value="F:erythrose-4-phosphate dehydrogenase activity"/>
    <property type="evidence" value="ECO:0007669"/>
    <property type="project" value="UniProtKB-UniRule"/>
</dbReference>
<dbReference type="GO" id="GO:0051287">
    <property type="term" value="F:NAD binding"/>
    <property type="evidence" value="ECO:0007669"/>
    <property type="project" value="InterPro"/>
</dbReference>
<dbReference type="GO" id="GO:0042823">
    <property type="term" value="P:pyridoxal phosphate biosynthetic process"/>
    <property type="evidence" value="ECO:0007669"/>
    <property type="project" value="UniProtKB-UniRule"/>
</dbReference>
<dbReference type="GO" id="GO:0008615">
    <property type="term" value="P:pyridoxine biosynthetic process"/>
    <property type="evidence" value="ECO:0007669"/>
    <property type="project" value="UniProtKB-UniRule"/>
</dbReference>
<dbReference type="CDD" id="cd23937">
    <property type="entry name" value="GAPDH_C_E4PDH"/>
    <property type="match status" value="1"/>
</dbReference>
<dbReference type="CDD" id="cd17892">
    <property type="entry name" value="GAPDH_N_E4PDH"/>
    <property type="match status" value="1"/>
</dbReference>
<dbReference type="FunFam" id="3.30.360.10:FF:000007">
    <property type="entry name" value="D-erythrose-4-phosphate dehydrogenase"/>
    <property type="match status" value="1"/>
</dbReference>
<dbReference type="FunFam" id="3.40.50.720:FF:000001">
    <property type="entry name" value="Glyceraldehyde-3-phosphate dehydrogenase"/>
    <property type="match status" value="1"/>
</dbReference>
<dbReference type="Gene3D" id="3.30.360.10">
    <property type="entry name" value="Dihydrodipicolinate Reductase, domain 2"/>
    <property type="match status" value="1"/>
</dbReference>
<dbReference type="Gene3D" id="3.40.50.720">
    <property type="entry name" value="NAD(P)-binding Rossmann-like Domain"/>
    <property type="match status" value="1"/>
</dbReference>
<dbReference type="HAMAP" id="MF_01640">
    <property type="entry name" value="E4P_dehydrog"/>
    <property type="match status" value="1"/>
</dbReference>
<dbReference type="InterPro" id="IPR006422">
    <property type="entry name" value="E4P_DH_bac"/>
</dbReference>
<dbReference type="InterPro" id="IPR020831">
    <property type="entry name" value="GlycerAld/Erythrose_P_DH"/>
</dbReference>
<dbReference type="InterPro" id="IPR020830">
    <property type="entry name" value="GlycerAld_3-P_DH_AS"/>
</dbReference>
<dbReference type="InterPro" id="IPR020829">
    <property type="entry name" value="GlycerAld_3-P_DH_cat"/>
</dbReference>
<dbReference type="InterPro" id="IPR020828">
    <property type="entry name" value="GlycerAld_3-P_DH_NAD(P)-bd"/>
</dbReference>
<dbReference type="InterPro" id="IPR036291">
    <property type="entry name" value="NAD(P)-bd_dom_sf"/>
</dbReference>
<dbReference type="NCBIfam" id="TIGR01532">
    <property type="entry name" value="E4PD_g-proteo"/>
    <property type="match status" value="1"/>
</dbReference>
<dbReference type="NCBIfam" id="NF010058">
    <property type="entry name" value="PRK13535.1"/>
    <property type="match status" value="1"/>
</dbReference>
<dbReference type="PANTHER" id="PTHR43148">
    <property type="entry name" value="GLYCERALDEHYDE-3-PHOSPHATE DEHYDROGENASE 2"/>
    <property type="match status" value="1"/>
</dbReference>
<dbReference type="Pfam" id="PF02800">
    <property type="entry name" value="Gp_dh_C"/>
    <property type="match status" value="1"/>
</dbReference>
<dbReference type="Pfam" id="PF00044">
    <property type="entry name" value="Gp_dh_N"/>
    <property type="match status" value="1"/>
</dbReference>
<dbReference type="PIRSF" id="PIRSF000149">
    <property type="entry name" value="GAP_DH"/>
    <property type="match status" value="1"/>
</dbReference>
<dbReference type="PRINTS" id="PR00078">
    <property type="entry name" value="G3PDHDRGNASE"/>
</dbReference>
<dbReference type="SMART" id="SM00846">
    <property type="entry name" value="Gp_dh_N"/>
    <property type="match status" value="1"/>
</dbReference>
<dbReference type="SUPFAM" id="SSF55347">
    <property type="entry name" value="Glyceraldehyde-3-phosphate dehydrogenase-like, C-terminal domain"/>
    <property type="match status" value="1"/>
</dbReference>
<dbReference type="SUPFAM" id="SSF51735">
    <property type="entry name" value="NAD(P)-binding Rossmann-fold domains"/>
    <property type="match status" value="1"/>
</dbReference>
<dbReference type="PROSITE" id="PS00071">
    <property type="entry name" value="GAPDH"/>
    <property type="match status" value="1"/>
</dbReference>
<sequence>MSIRIAINGYGRIGRSVVRALYENNRQDEMKVVVINELAEPSAIAHLTQYDSTHGRFPFPVNLQNNLLKIKNDDIHLVRFSELADLPWHEHDIDIVLDCTGIYGSRADADAHIAAGAKKVIFSHPADPDVDATVVYGINHQQLTGDETFISGASCTTNCMVPVIDTLDKHFAIKCGTITTIHSAMNDQPVIDAYHSDLRRTRAASQSIIPVDTKLAAGIERILPKFANKFEAIAVRVPTINVTAMDLSITVSKDVTIQEINDCLLKASETNLKDILGYTEAPLVSIDFNHDPRSCIIDGTQTRVSDGNLVKLLVWCDNEWGFANRLLDTSFYLANLAEQKRLQSTETVKSLEDTGISNEIKDELQDRRKII</sequence>
<protein>
    <recommendedName>
        <fullName evidence="1">D-erythrose-4-phosphate dehydrogenase</fullName>
        <shortName evidence="1">E4PDH</shortName>
        <ecNumber evidence="1">1.2.1.72</ecNumber>
    </recommendedName>
</protein>
<gene>
    <name evidence="1" type="primary">epd</name>
    <name type="ordered locus">Ping_1771</name>
</gene>
<comment type="function">
    <text evidence="1">Catalyzes the NAD-dependent conversion of D-erythrose 4-phosphate to 4-phosphoerythronate.</text>
</comment>
<comment type="catalytic activity">
    <reaction evidence="1">
        <text>D-erythrose 4-phosphate + NAD(+) + H2O = 4-phospho-D-erythronate + NADH + 2 H(+)</text>
        <dbReference type="Rhea" id="RHEA:12056"/>
        <dbReference type="ChEBI" id="CHEBI:15377"/>
        <dbReference type="ChEBI" id="CHEBI:15378"/>
        <dbReference type="ChEBI" id="CHEBI:16897"/>
        <dbReference type="ChEBI" id="CHEBI:57540"/>
        <dbReference type="ChEBI" id="CHEBI:57945"/>
        <dbReference type="ChEBI" id="CHEBI:58766"/>
        <dbReference type="EC" id="1.2.1.72"/>
    </reaction>
</comment>
<comment type="pathway">
    <text evidence="1">Cofactor biosynthesis; pyridoxine 5'-phosphate biosynthesis; pyridoxine 5'-phosphate from D-erythrose 4-phosphate: step 1/5.</text>
</comment>
<comment type="subunit">
    <text evidence="1">Homotetramer.</text>
</comment>
<comment type="subcellular location">
    <subcellularLocation>
        <location evidence="1">Cytoplasm</location>
    </subcellularLocation>
</comment>
<comment type="similarity">
    <text evidence="1">Belongs to the glyceraldehyde-3-phosphate dehydrogenase family. Epd subfamily.</text>
</comment>
<accession>A1SVN9</accession>
<name>E4PD_PSYIN</name>